<name>DNLJ_SHEPA</name>
<feature type="chain" id="PRO_0000340382" description="DNA ligase">
    <location>
        <begin position="1"/>
        <end position="668"/>
    </location>
</feature>
<feature type="domain" description="BRCT" evidence="1">
    <location>
        <begin position="591"/>
        <end position="668"/>
    </location>
</feature>
<feature type="active site" description="N6-AMP-lysine intermediate" evidence="1">
    <location>
        <position position="113"/>
    </location>
</feature>
<feature type="binding site" evidence="1">
    <location>
        <begin position="32"/>
        <end position="36"/>
    </location>
    <ligand>
        <name>NAD(+)</name>
        <dbReference type="ChEBI" id="CHEBI:57540"/>
    </ligand>
</feature>
<feature type="binding site" evidence="1">
    <location>
        <begin position="81"/>
        <end position="82"/>
    </location>
    <ligand>
        <name>NAD(+)</name>
        <dbReference type="ChEBI" id="CHEBI:57540"/>
    </ligand>
</feature>
<feature type="binding site" evidence="1">
    <location>
        <position position="111"/>
    </location>
    <ligand>
        <name>NAD(+)</name>
        <dbReference type="ChEBI" id="CHEBI:57540"/>
    </ligand>
</feature>
<feature type="binding site" evidence="1">
    <location>
        <position position="134"/>
    </location>
    <ligand>
        <name>NAD(+)</name>
        <dbReference type="ChEBI" id="CHEBI:57540"/>
    </ligand>
</feature>
<feature type="binding site" evidence="1">
    <location>
        <position position="171"/>
    </location>
    <ligand>
        <name>NAD(+)</name>
        <dbReference type="ChEBI" id="CHEBI:57540"/>
    </ligand>
</feature>
<feature type="binding site" evidence="1">
    <location>
        <position position="290"/>
    </location>
    <ligand>
        <name>NAD(+)</name>
        <dbReference type="ChEBI" id="CHEBI:57540"/>
    </ligand>
</feature>
<feature type="binding site" evidence="1">
    <location>
        <position position="314"/>
    </location>
    <ligand>
        <name>NAD(+)</name>
        <dbReference type="ChEBI" id="CHEBI:57540"/>
    </ligand>
</feature>
<feature type="binding site" evidence="1">
    <location>
        <position position="408"/>
    </location>
    <ligand>
        <name>Zn(2+)</name>
        <dbReference type="ChEBI" id="CHEBI:29105"/>
    </ligand>
</feature>
<feature type="binding site" evidence="1">
    <location>
        <position position="411"/>
    </location>
    <ligand>
        <name>Zn(2+)</name>
        <dbReference type="ChEBI" id="CHEBI:29105"/>
    </ligand>
</feature>
<feature type="binding site" evidence="1">
    <location>
        <position position="426"/>
    </location>
    <ligand>
        <name>Zn(2+)</name>
        <dbReference type="ChEBI" id="CHEBI:29105"/>
    </ligand>
</feature>
<feature type="binding site" evidence="1">
    <location>
        <position position="432"/>
    </location>
    <ligand>
        <name>Zn(2+)</name>
        <dbReference type="ChEBI" id="CHEBI:29105"/>
    </ligand>
</feature>
<comment type="function">
    <text evidence="1">DNA ligase that catalyzes the formation of phosphodiester linkages between 5'-phosphoryl and 3'-hydroxyl groups in double-stranded DNA using NAD as a coenzyme and as the energy source for the reaction. It is essential for DNA replication and repair of damaged DNA.</text>
</comment>
<comment type="catalytic activity">
    <reaction evidence="1">
        <text>NAD(+) + (deoxyribonucleotide)n-3'-hydroxyl + 5'-phospho-(deoxyribonucleotide)m = (deoxyribonucleotide)n+m + AMP + beta-nicotinamide D-nucleotide.</text>
        <dbReference type="EC" id="6.5.1.2"/>
    </reaction>
</comment>
<comment type="cofactor">
    <cofactor evidence="1">
        <name>Mg(2+)</name>
        <dbReference type="ChEBI" id="CHEBI:18420"/>
    </cofactor>
    <cofactor evidence="1">
        <name>Mn(2+)</name>
        <dbReference type="ChEBI" id="CHEBI:29035"/>
    </cofactor>
</comment>
<comment type="similarity">
    <text evidence="1">Belongs to the NAD-dependent DNA ligase family. LigA subfamily.</text>
</comment>
<sequence length="668" mass="73112">MPAIQNEIAQLTAELNQHNYRYYVDDSPSIPDAEYDRLLNRLKALETEHPEFCRPDSPTQRVGGEALAKFEQIKHLKPMLSLDNVFDEQEFTAFNQRIVDKTGKDLSYCCEPKLDGLAVSIVYRDGVFERAATRGDGQTGEDITENVRTIKSIPLTLRGDNFPPLVEVRGEVIMPHKAFDALNERARVKGDKLFVNPRNAAAGSLRQLDSKITASRALGFYAYALGVVEPETWELADSHYGQLEQLRSWGVPVSQEVRGCETVAEVMAYYYDIQQRRSSLEFEIDGVVVKVNQIAHQLSLGFVAKAPRWATAFKFPAQEEMTLLEGVDFQVGRTGAVTPVARLKPVFVGGVTVSNATLHNADEIARLGVKVGDTIIIRRAGDVIPQIVAVVAEKRPDDAKDIVFPAHCPVCDSEVERVEGEAVTRCTGGLFCEAQRKEAIKHFASRKALDIDGMGDKVVEQLIDKELVESPADLFRLTASAMTMLERMGMKSATKLVAAIEVAKQTTFARFLYALGIREVGEATAANLAAYFKTLEALKAASAEEFIKVDDVGTIVAAHLAHFLAQPHNLEVIDKLVEAGIHWPAVEEVAEEDLSLKGQTWVLTGTLTQLNRNDAKAKLQALGAKVAGSVSKNTDCLVAGAAAGSKLTKAQELGVKVIDEEALIAILS</sequence>
<gene>
    <name evidence="1" type="primary">ligA</name>
    <name type="ordered locus">Spea_1689</name>
</gene>
<keyword id="KW-0227">DNA damage</keyword>
<keyword id="KW-0234">DNA repair</keyword>
<keyword id="KW-0235">DNA replication</keyword>
<keyword id="KW-0436">Ligase</keyword>
<keyword id="KW-0460">Magnesium</keyword>
<keyword id="KW-0464">Manganese</keyword>
<keyword id="KW-0479">Metal-binding</keyword>
<keyword id="KW-0520">NAD</keyword>
<keyword id="KW-1185">Reference proteome</keyword>
<keyword id="KW-0862">Zinc</keyword>
<organism>
    <name type="scientific">Shewanella pealeana (strain ATCC 700345 / ANG-SQ1)</name>
    <dbReference type="NCBI Taxonomy" id="398579"/>
    <lineage>
        <taxon>Bacteria</taxon>
        <taxon>Pseudomonadati</taxon>
        <taxon>Pseudomonadota</taxon>
        <taxon>Gammaproteobacteria</taxon>
        <taxon>Alteromonadales</taxon>
        <taxon>Shewanellaceae</taxon>
        <taxon>Shewanella</taxon>
    </lineage>
</organism>
<proteinExistence type="inferred from homology"/>
<protein>
    <recommendedName>
        <fullName evidence="1">DNA ligase</fullName>
        <ecNumber evidence="1">6.5.1.2</ecNumber>
    </recommendedName>
    <alternativeName>
        <fullName evidence="1">Polydeoxyribonucleotide synthase [NAD(+)]</fullName>
    </alternativeName>
</protein>
<dbReference type="EC" id="6.5.1.2" evidence="1"/>
<dbReference type="EMBL" id="CP000851">
    <property type="protein sequence ID" value="ABV87013.1"/>
    <property type="molecule type" value="Genomic_DNA"/>
</dbReference>
<dbReference type="RefSeq" id="WP_012154933.1">
    <property type="nucleotide sequence ID" value="NC_009901.1"/>
</dbReference>
<dbReference type="SMR" id="A8H376"/>
<dbReference type="STRING" id="398579.Spea_1689"/>
<dbReference type="KEGG" id="spl:Spea_1689"/>
<dbReference type="eggNOG" id="COG0272">
    <property type="taxonomic scope" value="Bacteria"/>
</dbReference>
<dbReference type="HOGENOM" id="CLU_007764_2_1_6"/>
<dbReference type="OrthoDB" id="9759736at2"/>
<dbReference type="Proteomes" id="UP000002608">
    <property type="component" value="Chromosome"/>
</dbReference>
<dbReference type="GO" id="GO:0005829">
    <property type="term" value="C:cytosol"/>
    <property type="evidence" value="ECO:0007669"/>
    <property type="project" value="TreeGrafter"/>
</dbReference>
<dbReference type="GO" id="GO:0003677">
    <property type="term" value="F:DNA binding"/>
    <property type="evidence" value="ECO:0007669"/>
    <property type="project" value="InterPro"/>
</dbReference>
<dbReference type="GO" id="GO:0003911">
    <property type="term" value="F:DNA ligase (NAD+) activity"/>
    <property type="evidence" value="ECO:0007669"/>
    <property type="project" value="UniProtKB-UniRule"/>
</dbReference>
<dbReference type="GO" id="GO:0046872">
    <property type="term" value="F:metal ion binding"/>
    <property type="evidence" value="ECO:0007669"/>
    <property type="project" value="UniProtKB-KW"/>
</dbReference>
<dbReference type="GO" id="GO:0006281">
    <property type="term" value="P:DNA repair"/>
    <property type="evidence" value="ECO:0007669"/>
    <property type="project" value="UniProtKB-KW"/>
</dbReference>
<dbReference type="GO" id="GO:0006260">
    <property type="term" value="P:DNA replication"/>
    <property type="evidence" value="ECO:0007669"/>
    <property type="project" value="UniProtKB-KW"/>
</dbReference>
<dbReference type="CDD" id="cd17748">
    <property type="entry name" value="BRCT_DNA_ligase_like"/>
    <property type="match status" value="1"/>
</dbReference>
<dbReference type="CDD" id="cd00114">
    <property type="entry name" value="LIGANc"/>
    <property type="match status" value="1"/>
</dbReference>
<dbReference type="FunFam" id="1.10.150.20:FF:000006">
    <property type="entry name" value="DNA ligase"/>
    <property type="match status" value="1"/>
</dbReference>
<dbReference type="FunFam" id="1.10.150.20:FF:000007">
    <property type="entry name" value="DNA ligase"/>
    <property type="match status" value="1"/>
</dbReference>
<dbReference type="FunFam" id="1.10.287.610:FF:000002">
    <property type="entry name" value="DNA ligase"/>
    <property type="match status" value="1"/>
</dbReference>
<dbReference type="FunFam" id="2.40.50.140:FF:000012">
    <property type="entry name" value="DNA ligase"/>
    <property type="match status" value="1"/>
</dbReference>
<dbReference type="FunFam" id="3.30.470.30:FF:000001">
    <property type="entry name" value="DNA ligase"/>
    <property type="match status" value="1"/>
</dbReference>
<dbReference type="FunFam" id="6.20.10.30:FF:000001">
    <property type="entry name" value="DNA ligase"/>
    <property type="match status" value="1"/>
</dbReference>
<dbReference type="Gene3D" id="6.20.10.30">
    <property type="match status" value="1"/>
</dbReference>
<dbReference type="Gene3D" id="1.10.150.20">
    <property type="entry name" value="5' to 3' exonuclease, C-terminal subdomain"/>
    <property type="match status" value="2"/>
</dbReference>
<dbReference type="Gene3D" id="3.40.50.10190">
    <property type="entry name" value="BRCT domain"/>
    <property type="match status" value="1"/>
</dbReference>
<dbReference type="Gene3D" id="3.30.470.30">
    <property type="entry name" value="DNA ligase/mRNA capping enzyme"/>
    <property type="match status" value="1"/>
</dbReference>
<dbReference type="Gene3D" id="1.10.287.610">
    <property type="entry name" value="Helix hairpin bin"/>
    <property type="match status" value="1"/>
</dbReference>
<dbReference type="Gene3D" id="2.40.50.140">
    <property type="entry name" value="Nucleic acid-binding proteins"/>
    <property type="match status" value="1"/>
</dbReference>
<dbReference type="HAMAP" id="MF_01588">
    <property type="entry name" value="DNA_ligase_A"/>
    <property type="match status" value="1"/>
</dbReference>
<dbReference type="InterPro" id="IPR001357">
    <property type="entry name" value="BRCT_dom"/>
</dbReference>
<dbReference type="InterPro" id="IPR036420">
    <property type="entry name" value="BRCT_dom_sf"/>
</dbReference>
<dbReference type="InterPro" id="IPR041663">
    <property type="entry name" value="DisA/LigA_HHH"/>
</dbReference>
<dbReference type="InterPro" id="IPR001679">
    <property type="entry name" value="DNA_ligase"/>
</dbReference>
<dbReference type="InterPro" id="IPR018239">
    <property type="entry name" value="DNA_ligase_AS"/>
</dbReference>
<dbReference type="InterPro" id="IPR033136">
    <property type="entry name" value="DNA_ligase_CS"/>
</dbReference>
<dbReference type="InterPro" id="IPR013839">
    <property type="entry name" value="DNAligase_adenylation"/>
</dbReference>
<dbReference type="InterPro" id="IPR013840">
    <property type="entry name" value="DNAligase_N"/>
</dbReference>
<dbReference type="InterPro" id="IPR003583">
    <property type="entry name" value="Hlx-hairpin-Hlx_DNA-bd_motif"/>
</dbReference>
<dbReference type="InterPro" id="IPR012340">
    <property type="entry name" value="NA-bd_OB-fold"/>
</dbReference>
<dbReference type="InterPro" id="IPR004150">
    <property type="entry name" value="NAD_DNA_ligase_OB"/>
</dbReference>
<dbReference type="InterPro" id="IPR010994">
    <property type="entry name" value="RuvA_2-like"/>
</dbReference>
<dbReference type="InterPro" id="IPR004149">
    <property type="entry name" value="Znf_DNAligase_C4"/>
</dbReference>
<dbReference type="NCBIfam" id="TIGR00575">
    <property type="entry name" value="dnlj"/>
    <property type="match status" value="1"/>
</dbReference>
<dbReference type="NCBIfam" id="NF005932">
    <property type="entry name" value="PRK07956.1"/>
    <property type="match status" value="1"/>
</dbReference>
<dbReference type="PANTHER" id="PTHR23389">
    <property type="entry name" value="CHROMOSOME TRANSMISSION FIDELITY FACTOR 18"/>
    <property type="match status" value="1"/>
</dbReference>
<dbReference type="PANTHER" id="PTHR23389:SF9">
    <property type="entry name" value="DNA LIGASE"/>
    <property type="match status" value="1"/>
</dbReference>
<dbReference type="Pfam" id="PF00533">
    <property type="entry name" value="BRCT"/>
    <property type="match status" value="1"/>
</dbReference>
<dbReference type="Pfam" id="PF01653">
    <property type="entry name" value="DNA_ligase_aden"/>
    <property type="match status" value="1"/>
</dbReference>
<dbReference type="Pfam" id="PF03120">
    <property type="entry name" value="DNA_ligase_OB"/>
    <property type="match status" value="1"/>
</dbReference>
<dbReference type="Pfam" id="PF03119">
    <property type="entry name" value="DNA_ligase_ZBD"/>
    <property type="match status" value="1"/>
</dbReference>
<dbReference type="Pfam" id="PF12826">
    <property type="entry name" value="HHH_2"/>
    <property type="match status" value="1"/>
</dbReference>
<dbReference type="Pfam" id="PF14520">
    <property type="entry name" value="HHH_5"/>
    <property type="match status" value="1"/>
</dbReference>
<dbReference type="Pfam" id="PF22745">
    <property type="entry name" value="Nlig-Ia"/>
    <property type="match status" value="1"/>
</dbReference>
<dbReference type="PIRSF" id="PIRSF001604">
    <property type="entry name" value="LigA"/>
    <property type="match status" value="1"/>
</dbReference>
<dbReference type="SMART" id="SM00292">
    <property type="entry name" value="BRCT"/>
    <property type="match status" value="1"/>
</dbReference>
<dbReference type="SMART" id="SM00278">
    <property type="entry name" value="HhH1"/>
    <property type="match status" value="4"/>
</dbReference>
<dbReference type="SMART" id="SM00532">
    <property type="entry name" value="LIGANc"/>
    <property type="match status" value="1"/>
</dbReference>
<dbReference type="SUPFAM" id="SSF52113">
    <property type="entry name" value="BRCT domain"/>
    <property type="match status" value="1"/>
</dbReference>
<dbReference type="SUPFAM" id="SSF56091">
    <property type="entry name" value="DNA ligase/mRNA capping enzyme, catalytic domain"/>
    <property type="match status" value="1"/>
</dbReference>
<dbReference type="SUPFAM" id="SSF50249">
    <property type="entry name" value="Nucleic acid-binding proteins"/>
    <property type="match status" value="1"/>
</dbReference>
<dbReference type="SUPFAM" id="SSF47781">
    <property type="entry name" value="RuvA domain 2-like"/>
    <property type="match status" value="1"/>
</dbReference>
<dbReference type="PROSITE" id="PS50172">
    <property type="entry name" value="BRCT"/>
    <property type="match status" value="1"/>
</dbReference>
<dbReference type="PROSITE" id="PS01055">
    <property type="entry name" value="DNA_LIGASE_N1"/>
    <property type="match status" value="1"/>
</dbReference>
<dbReference type="PROSITE" id="PS01056">
    <property type="entry name" value="DNA_LIGASE_N2"/>
    <property type="match status" value="1"/>
</dbReference>
<evidence type="ECO:0000255" key="1">
    <source>
        <dbReference type="HAMAP-Rule" id="MF_01588"/>
    </source>
</evidence>
<accession>A8H376</accession>
<reference key="1">
    <citation type="submission" date="2007-10" db="EMBL/GenBank/DDBJ databases">
        <title>Complete sequence of Shewanella pealeana ATCC 700345.</title>
        <authorList>
            <consortium name="US DOE Joint Genome Institute"/>
            <person name="Copeland A."/>
            <person name="Lucas S."/>
            <person name="Lapidus A."/>
            <person name="Barry K."/>
            <person name="Glavina del Rio T."/>
            <person name="Dalin E."/>
            <person name="Tice H."/>
            <person name="Pitluck S."/>
            <person name="Chertkov O."/>
            <person name="Brettin T."/>
            <person name="Bruce D."/>
            <person name="Detter J.C."/>
            <person name="Han C."/>
            <person name="Schmutz J."/>
            <person name="Larimer F."/>
            <person name="Land M."/>
            <person name="Hauser L."/>
            <person name="Kyrpides N."/>
            <person name="Kim E."/>
            <person name="Zhao J.-S.Z."/>
            <person name="Manno D."/>
            <person name="Hawari J."/>
            <person name="Richardson P."/>
        </authorList>
    </citation>
    <scope>NUCLEOTIDE SEQUENCE [LARGE SCALE GENOMIC DNA]</scope>
    <source>
        <strain>ATCC 700345 / ANG-SQ1</strain>
    </source>
</reference>